<comment type="function">
    <text evidence="1">eIF-2 functions in the early steps of protein synthesis by forming a ternary complex with GTP and initiator tRNA.</text>
</comment>
<comment type="subunit">
    <text evidence="1">Heterotrimer composed of an alpha, a beta and a gamma chain.</text>
</comment>
<comment type="similarity">
    <text evidence="1">Belongs to the eIF-2-beta/eIF-5 family.</text>
</comment>
<sequence>MEEYENLLNRAIDQLPPEVFEHKRFKIPKAYSDIQGNRTFIKNFKDVAEDLNRDPQHVLKFLLRELGTAGNLEGSRAILQGKFTHYLINERLEDYVEKYVICHECNRPDTKIIREDRIFILKCAACGAKAPLKPL</sequence>
<proteinExistence type="inferred from homology"/>
<feature type="chain" id="PRO_1000021653" description="Translation initiation factor 2 subunit beta">
    <location>
        <begin position="1"/>
        <end position="135"/>
    </location>
</feature>
<accession>A5UKI8</accession>
<name>IF2B_METS3</name>
<evidence type="ECO:0000255" key="1">
    <source>
        <dbReference type="HAMAP-Rule" id="MF_00232"/>
    </source>
</evidence>
<protein>
    <recommendedName>
        <fullName evidence="1">Translation initiation factor 2 subunit beta</fullName>
    </recommendedName>
    <alternativeName>
        <fullName evidence="1">aIF2-beta</fullName>
    </alternativeName>
    <alternativeName>
        <fullName evidence="1">eIF-2-beta</fullName>
    </alternativeName>
</protein>
<keyword id="KW-0396">Initiation factor</keyword>
<keyword id="KW-0648">Protein biosynthesis</keyword>
<dbReference type="EMBL" id="CP000678">
    <property type="protein sequence ID" value="ABQ86716.1"/>
    <property type="molecule type" value="Genomic_DNA"/>
</dbReference>
<dbReference type="RefSeq" id="WP_004032261.1">
    <property type="nucleotide sequence ID" value="NZ_CP117965.1"/>
</dbReference>
<dbReference type="SMR" id="A5UKI8"/>
<dbReference type="STRING" id="420247.Msm_0511"/>
<dbReference type="EnsemblBacteria" id="ABQ86716">
    <property type="protein sequence ID" value="ABQ86716"/>
    <property type="gene ID" value="Msm_0511"/>
</dbReference>
<dbReference type="KEGG" id="msi:Msm_0511"/>
<dbReference type="PATRIC" id="fig|420247.28.peg.510"/>
<dbReference type="eggNOG" id="arCOG01640">
    <property type="taxonomic scope" value="Archaea"/>
</dbReference>
<dbReference type="HOGENOM" id="CLU_026663_3_1_2"/>
<dbReference type="Proteomes" id="UP000001992">
    <property type="component" value="Chromosome"/>
</dbReference>
<dbReference type="GO" id="GO:0003743">
    <property type="term" value="F:translation initiation factor activity"/>
    <property type="evidence" value="ECO:0007669"/>
    <property type="project" value="UniProtKB-UniRule"/>
</dbReference>
<dbReference type="FunFam" id="3.30.30.170:FF:000001">
    <property type="entry name" value="Eukaryotic translation initiation factor 2 subunit"/>
    <property type="match status" value="1"/>
</dbReference>
<dbReference type="Gene3D" id="3.30.30.170">
    <property type="match status" value="1"/>
</dbReference>
<dbReference type="HAMAP" id="MF_00232">
    <property type="entry name" value="eIF_2_beta"/>
    <property type="match status" value="1"/>
</dbReference>
<dbReference type="InterPro" id="IPR045196">
    <property type="entry name" value="IF2/IF5"/>
</dbReference>
<dbReference type="InterPro" id="IPR004458">
    <property type="entry name" value="TIF2_bsu_arc"/>
</dbReference>
<dbReference type="InterPro" id="IPR002735">
    <property type="entry name" value="Transl_init_fac_IF2/IF5_dom"/>
</dbReference>
<dbReference type="InterPro" id="IPR016189">
    <property type="entry name" value="Transl_init_fac_IF2/IF5_N"/>
</dbReference>
<dbReference type="InterPro" id="IPR016190">
    <property type="entry name" value="Transl_init_fac_IF2/IF5_Zn-bd"/>
</dbReference>
<dbReference type="NCBIfam" id="TIGR00311">
    <property type="entry name" value="aIF-2beta"/>
    <property type="match status" value="1"/>
</dbReference>
<dbReference type="NCBIfam" id="NF003067">
    <property type="entry name" value="PRK03988.1"/>
    <property type="match status" value="1"/>
</dbReference>
<dbReference type="PANTHER" id="PTHR23001">
    <property type="entry name" value="EUKARYOTIC TRANSLATION INITIATION FACTOR"/>
    <property type="match status" value="1"/>
</dbReference>
<dbReference type="PANTHER" id="PTHR23001:SF3">
    <property type="entry name" value="EUKARYOTIC TRANSLATION INITIATION FACTOR 2 SUBUNIT 2"/>
    <property type="match status" value="1"/>
</dbReference>
<dbReference type="Pfam" id="PF01873">
    <property type="entry name" value="eIF-5_eIF-2B"/>
    <property type="match status" value="1"/>
</dbReference>
<dbReference type="SMART" id="SM00653">
    <property type="entry name" value="eIF2B_5"/>
    <property type="match status" value="1"/>
</dbReference>
<dbReference type="SUPFAM" id="SSF100966">
    <property type="entry name" value="Translation initiation factor 2 beta, aIF2beta, N-terminal domain"/>
    <property type="match status" value="1"/>
</dbReference>
<dbReference type="SUPFAM" id="SSF75689">
    <property type="entry name" value="Zinc-binding domain of translation initiation factor 2 beta"/>
    <property type="match status" value="1"/>
</dbReference>
<reference key="1">
    <citation type="journal article" date="2007" name="Proc. Natl. Acad. Sci. U.S.A.">
        <title>Genomic and metabolic adaptations of Methanobrevibacter smithii to the human gut.</title>
        <authorList>
            <person name="Samuel B.S."/>
            <person name="Hansen E.E."/>
            <person name="Manchester J.K."/>
            <person name="Coutinho P.M."/>
            <person name="Henrissat B."/>
            <person name="Fulton R."/>
            <person name="Latreille P."/>
            <person name="Kim K."/>
            <person name="Wilson R.K."/>
            <person name="Gordon J.I."/>
        </authorList>
    </citation>
    <scope>NUCLEOTIDE SEQUENCE [LARGE SCALE GENOMIC DNA]</scope>
    <source>
        <strain>ATCC 35061 / DSM 861 / OCM 144 / PS</strain>
    </source>
</reference>
<gene>
    <name evidence="1" type="primary">eif2b</name>
    <name type="ordered locus">Msm_0511</name>
</gene>
<organism>
    <name type="scientific">Methanobrevibacter smithii (strain ATCC 35061 / DSM 861 / OCM 144 / PS)</name>
    <dbReference type="NCBI Taxonomy" id="420247"/>
    <lineage>
        <taxon>Archaea</taxon>
        <taxon>Methanobacteriati</taxon>
        <taxon>Methanobacteriota</taxon>
        <taxon>Methanomada group</taxon>
        <taxon>Methanobacteria</taxon>
        <taxon>Methanobacteriales</taxon>
        <taxon>Methanobacteriaceae</taxon>
        <taxon>Methanobrevibacter</taxon>
    </lineage>
</organism>